<gene>
    <name evidence="1" type="primary">atpA</name>
    <name type="ordered locus">PsycPRwf_0191</name>
</gene>
<proteinExistence type="inferred from homology"/>
<comment type="function">
    <text evidence="1">Produces ATP from ADP in the presence of a proton gradient across the membrane. The alpha chain is a regulatory subunit.</text>
</comment>
<comment type="catalytic activity">
    <reaction evidence="1">
        <text>ATP + H2O + 4 H(+)(in) = ADP + phosphate + 5 H(+)(out)</text>
        <dbReference type="Rhea" id="RHEA:57720"/>
        <dbReference type="ChEBI" id="CHEBI:15377"/>
        <dbReference type="ChEBI" id="CHEBI:15378"/>
        <dbReference type="ChEBI" id="CHEBI:30616"/>
        <dbReference type="ChEBI" id="CHEBI:43474"/>
        <dbReference type="ChEBI" id="CHEBI:456216"/>
        <dbReference type="EC" id="7.1.2.2"/>
    </reaction>
</comment>
<comment type="subunit">
    <text evidence="1">F-type ATPases have 2 components, CF(1) - the catalytic core - and CF(0) - the membrane proton channel. CF(1) has five subunits: alpha(3), beta(3), gamma(1), delta(1), epsilon(1). CF(0) has three main subunits: a(1), b(2) and c(9-12). The alpha and beta chains form an alternating ring which encloses part of the gamma chain. CF(1) is attached to CF(0) by a central stalk formed by the gamma and epsilon chains, while a peripheral stalk is formed by the delta and b chains.</text>
</comment>
<comment type="subcellular location">
    <subcellularLocation>
        <location evidence="1">Cell inner membrane</location>
        <topology evidence="1">Peripheral membrane protein</topology>
    </subcellularLocation>
</comment>
<comment type="similarity">
    <text evidence="1">Belongs to the ATPase alpha/beta chains family.</text>
</comment>
<sequence length="514" mass="55810">MQQLNPAEISQLIKQRIQDLDTSATAKNEGTIVKVSDGIVQIHGLEDAMYGEMIEFEGDVYGMALNLEQDSVGAVVLGDYLGLQEGQKAYCTGRILEVPVGPELLGRVVDALGNPIDGKGPINAKLTDKVEKIAPGVIARQSVDEPVMTGYKAVDTMIPIGRGQRELIIGDRQTGKTAMAIDAIIAQKNSGIKCVYVAIGQKRSTIANVVRKLEETGALAYTTVVVASASEPAALQYIAPYSGCTMGEYFRDRGEDALIVYDDLSKQAVAYRQISLLLRRPPGREAYPGDVFYLHSRLLERASRVNAAYVEEFTNGEVKGQTGSLTALPIIETQAGDVSAFVPTNVISITDGQIFLESSLFNSGIRPAVNAGISVSRVGGAAQTKIIKKLSGGIRTALAQYRELAAFAQFASDLDDATKQQLDHGERVTELMKQKQYQPMSIAEQAAVIFASNEGYLSAIPVEKIGAWEEAYLRYMYDEQADLMQEINDTANYNDDIAGRLKSSVETFLQNHTF</sequence>
<protein>
    <recommendedName>
        <fullName evidence="1">ATP synthase subunit alpha</fullName>
        <ecNumber evidence="1">7.1.2.2</ecNumber>
    </recommendedName>
    <alternativeName>
        <fullName evidence="1">ATP synthase F1 sector subunit alpha</fullName>
    </alternativeName>
    <alternativeName>
        <fullName evidence="1">F-ATPase subunit alpha</fullName>
    </alternativeName>
</protein>
<evidence type="ECO:0000255" key="1">
    <source>
        <dbReference type="HAMAP-Rule" id="MF_01346"/>
    </source>
</evidence>
<reference key="1">
    <citation type="submission" date="2007-05" db="EMBL/GenBank/DDBJ databases">
        <title>Complete sequence of chromosome of Psychrobacter sp. PRwf-1.</title>
        <authorList>
            <consortium name="US DOE Joint Genome Institute"/>
            <person name="Copeland A."/>
            <person name="Lucas S."/>
            <person name="Lapidus A."/>
            <person name="Barry K."/>
            <person name="Detter J.C."/>
            <person name="Glavina del Rio T."/>
            <person name="Hammon N."/>
            <person name="Israni S."/>
            <person name="Dalin E."/>
            <person name="Tice H."/>
            <person name="Pitluck S."/>
            <person name="Chain P."/>
            <person name="Malfatti S."/>
            <person name="Shin M."/>
            <person name="Vergez L."/>
            <person name="Schmutz J."/>
            <person name="Larimer F."/>
            <person name="Land M."/>
            <person name="Hauser L."/>
            <person name="Kyrpides N."/>
            <person name="Kim E."/>
            <person name="Tiedje J."/>
            <person name="Richardson P."/>
        </authorList>
    </citation>
    <scope>NUCLEOTIDE SEQUENCE [LARGE SCALE GENOMIC DNA]</scope>
    <source>
        <strain>PRwf-1</strain>
    </source>
</reference>
<accession>A5WBV9</accession>
<dbReference type="EC" id="7.1.2.2" evidence="1"/>
<dbReference type="EMBL" id="CP000713">
    <property type="protein sequence ID" value="ABQ93150.1"/>
    <property type="molecule type" value="Genomic_DNA"/>
</dbReference>
<dbReference type="SMR" id="A5WBV9"/>
<dbReference type="STRING" id="349106.PsycPRwf_0191"/>
<dbReference type="KEGG" id="prw:PsycPRwf_0191"/>
<dbReference type="eggNOG" id="COG0056">
    <property type="taxonomic scope" value="Bacteria"/>
</dbReference>
<dbReference type="HOGENOM" id="CLU_010091_2_1_6"/>
<dbReference type="GO" id="GO:0005886">
    <property type="term" value="C:plasma membrane"/>
    <property type="evidence" value="ECO:0007669"/>
    <property type="project" value="UniProtKB-SubCell"/>
</dbReference>
<dbReference type="GO" id="GO:0045259">
    <property type="term" value="C:proton-transporting ATP synthase complex"/>
    <property type="evidence" value="ECO:0007669"/>
    <property type="project" value="UniProtKB-KW"/>
</dbReference>
<dbReference type="GO" id="GO:0043531">
    <property type="term" value="F:ADP binding"/>
    <property type="evidence" value="ECO:0007669"/>
    <property type="project" value="TreeGrafter"/>
</dbReference>
<dbReference type="GO" id="GO:0005524">
    <property type="term" value="F:ATP binding"/>
    <property type="evidence" value="ECO:0007669"/>
    <property type="project" value="UniProtKB-UniRule"/>
</dbReference>
<dbReference type="GO" id="GO:0046933">
    <property type="term" value="F:proton-transporting ATP synthase activity, rotational mechanism"/>
    <property type="evidence" value="ECO:0007669"/>
    <property type="project" value="UniProtKB-UniRule"/>
</dbReference>
<dbReference type="CDD" id="cd18113">
    <property type="entry name" value="ATP-synt_F1_alpha_C"/>
    <property type="match status" value="1"/>
</dbReference>
<dbReference type="CDD" id="cd18116">
    <property type="entry name" value="ATP-synt_F1_alpha_N"/>
    <property type="match status" value="1"/>
</dbReference>
<dbReference type="CDD" id="cd01132">
    <property type="entry name" value="F1-ATPase_alpha_CD"/>
    <property type="match status" value="1"/>
</dbReference>
<dbReference type="FunFam" id="1.20.150.20:FF:000001">
    <property type="entry name" value="ATP synthase subunit alpha"/>
    <property type="match status" value="1"/>
</dbReference>
<dbReference type="FunFam" id="2.40.30.20:FF:000001">
    <property type="entry name" value="ATP synthase subunit alpha"/>
    <property type="match status" value="1"/>
</dbReference>
<dbReference type="FunFam" id="3.40.50.300:FF:000002">
    <property type="entry name" value="ATP synthase subunit alpha"/>
    <property type="match status" value="1"/>
</dbReference>
<dbReference type="Gene3D" id="2.40.30.20">
    <property type="match status" value="1"/>
</dbReference>
<dbReference type="Gene3D" id="1.20.150.20">
    <property type="entry name" value="ATP synthase alpha/beta chain, C-terminal domain"/>
    <property type="match status" value="1"/>
</dbReference>
<dbReference type="Gene3D" id="3.40.50.300">
    <property type="entry name" value="P-loop containing nucleotide triphosphate hydrolases"/>
    <property type="match status" value="1"/>
</dbReference>
<dbReference type="HAMAP" id="MF_01346">
    <property type="entry name" value="ATP_synth_alpha_bact"/>
    <property type="match status" value="1"/>
</dbReference>
<dbReference type="InterPro" id="IPR023366">
    <property type="entry name" value="ATP_synth_asu-like_sf"/>
</dbReference>
<dbReference type="InterPro" id="IPR000793">
    <property type="entry name" value="ATP_synth_asu_C"/>
</dbReference>
<dbReference type="InterPro" id="IPR038376">
    <property type="entry name" value="ATP_synth_asu_C_sf"/>
</dbReference>
<dbReference type="InterPro" id="IPR033732">
    <property type="entry name" value="ATP_synth_F1_a_nt-bd_dom"/>
</dbReference>
<dbReference type="InterPro" id="IPR005294">
    <property type="entry name" value="ATP_synth_F1_asu"/>
</dbReference>
<dbReference type="InterPro" id="IPR020003">
    <property type="entry name" value="ATPase_a/bsu_AS"/>
</dbReference>
<dbReference type="InterPro" id="IPR004100">
    <property type="entry name" value="ATPase_F1/V1/A1_a/bsu_N"/>
</dbReference>
<dbReference type="InterPro" id="IPR036121">
    <property type="entry name" value="ATPase_F1/V1/A1_a/bsu_N_sf"/>
</dbReference>
<dbReference type="InterPro" id="IPR000194">
    <property type="entry name" value="ATPase_F1/V1/A1_a/bsu_nucl-bd"/>
</dbReference>
<dbReference type="InterPro" id="IPR027417">
    <property type="entry name" value="P-loop_NTPase"/>
</dbReference>
<dbReference type="NCBIfam" id="TIGR00962">
    <property type="entry name" value="atpA"/>
    <property type="match status" value="1"/>
</dbReference>
<dbReference type="NCBIfam" id="NF009884">
    <property type="entry name" value="PRK13343.1"/>
    <property type="match status" value="1"/>
</dbReference>
<dbReference type="PANTHER" id="PTHR48082">
    <property type="entry name" value="ATP SYNTHASE SUBUNIT ALPHA, MITOCHONDRIAL"/>
    <property type="match status" value="1"/>
</dbReference>
<dbReference type="PANTHER" id="PTHR48082:SF2">
    <property type="entry name" value="ATP SYNTHASE SUBUNIT ALPHA, MITOCHONDRIAL"/>
    <property type="match status" value="1"/>
</dbReference>
<dbReference type="Pfam" id="PF00006">
    <property type="entry name" value="ATP-synt_ab"/>
    <property type="match status" value="1"/>
</dbReference>
<dbReference type="Pfam" id="PF00306">
    <property type="entry name" value="ATP-synt_ab_C"/>
    <property type="match status" value="1"/>
</dbReference>
<dbReference type="Pfam" id="PF02874">
    <property type="entry name" value="ATP-synt_ab_N"/>
    <property type="match status" value="1"/>
</dbReference>
<dbReference type="PIRSF" id="PIRSF039088">
    <property type="entry name" value="F_ATPase_subunit_alpha"/>
    <property type="match status" value="1"/>
</dbReference>
<dbReference type="SUPFAM" id="SSF47917">
    <property type="entry name" value="C-terminal domain of alpha and beta subunits of F1 ATP synthase"/>
    <property type="match status" value="1"/>
</dbReference>
<dbReference type="SUPFAM" id="SSF50615">
    <property type="entry name" value="N-terminal domain of alpha and beta subunits of F1 ATP synthase"/>
    <property type="match status" value="1"/>
</dbReference>
<dbReference type="SUPFAM" id="SSF52540">
    <property type="entry name" value="P-loop containing nucleoside triphosphate hydrolases"/>
    <property type="match status" value="1"/>
</dbReference>
<dbReference type="PROSITE" id="PS00152">
    <property type="entry name" value="ATPASE_ALPHA_BETA"/>
    <property type="match status" value="1"/>
</dbReference>
<name>ATPA_PSYWF</name>
<feature type="chain" id="PRO_1000073358" description="ATP synthase subunit alpha">
    <location>
        <begin position="1"/>
        <end position="514"/>
    </location>
</feature>
<feature type="binding site" evidence="1">
    <location>
        <begin position="170"/>
        <end position="177"/>
    </location>
    <ligand>
        <name>ATP</name>
        <dbReference type="ChEBI" id="CHEBI:30616"/>
    </ligand>
</feature>
<feature type="site" description="Required for activity" evidence="1">
    <location>
        <position position="374"/>
    </location>
</feature>
<organism>
    <name type="scientific">Psychrobacter sp. (strain PRwf-1)</name>
    <dbReference type="NCBI Taxonomy" id="349106"/>
    <lineage>
        <taxon>Bacteria</taxon>
        <taxon>Pseudomonadati</taxon>
        <taxon>Pseudomonadota</taxon>
        <taxon>Gammaproteobacteria</taxon>
        <taxon>Moraxellales</taxon>
        <taxon>Moraxellaceae</taxon>
        <taxon>Psychrobacter</taxon>
    </lineage>
</organism>
<keyword id="KW-0066">ATP synthesis</keyword>
<keyword id="KW-0067">ATP-binding</keyword>
<keyword id="KW-0997">Cell inner membrane</keyword>
<keyword id="KW-1003">Cell membrane</keyword>
<keyword id="KW-0139">CF(1)</keyword>
<keyword id="KW-0375">Hydrogen ion transport</keyword>
<keyword id="KW-0406">Ion transport</keyword>
<keyword id="KW-0472">Membrane</keyword>
<keyword id="KW-0547">Nucleotide-binding</keyword>
<keyword id="KW-1278">Translocase</keyword>
<keyword id="KW-0813">Transport</keyword>